<keyword id="KW-1003">Cell membrane</keyword>
<keyword id="KW-0472">Membrane</keyword>
<keyword id="KW-0812">Transmembrane</keyword>
<keyword id="KW-1133">Transmembrane helix</keyword>
<reference key="1">
    <citation type="journal article" date="2001" name="Lancet">
        <title>Whole genome sequencing of meticillin-resistant Staphylococcus aureus.</title>
        <authorList>
            <person name="Kuroda M."/>
            <person name="Ohta T."/>
            <person name="Uchiyama I."/>
            <person name="Baba T."/>
            <person name="Yuzawa H."/>
            <person name="Kobayashi I."/>
            <person name="Cui L."/>
            <person name="Oguchi A."/>
            <person name="Aoki K."/>
            <person name="Nagai Y."/>
            <person name="Lian J.-Q."/>
            <person name="Ito T."/>
            <person name="Kanamori M."/>
            <person name="Matsumaru H."/>
            <person name="Maruyama A."/>
            <person name="Murakami H."/>
            <person name="Hosoyama A."/>
            <person name="Mizutani-Ui Y."/>
            <person name="Takahashi N.K."/>
            <person name="Sawano T."/>
            <person name="Inoue R."/>
            <person name="Kaito C."/>
            <person name="Sekimizu K."/>
            <person name="Hirakawa H."/>
            <person name="Kuhara S."/>
            <person name="Goto S."/>
            <person name="Yabuzaki J."/>
            <person name="Kanehisa M."/>
            <person name="Yamashita A."/>
            <person name="Oshima K."/>
            <person name="Furuya K."/>
            <person name="Yoshino C."/>
            <person name="Shiba T."/>
            <person name="Hattori M."/>
            <person name="Ogasawara N."/>
            <person name="Hayashi H."/>
            <person name="Hiramatsu K."/>
        </authorList>
    </citation>
    <scope>NUCLEOTIDE SEQUENCE [LARGE SCALE GENOMIC DNA]</scope>
    <source>
        <strain>N315</strain>
    </source>
</reference>
<reference key="2">
    <citation type="submission" date="2007-10" db="UniProtKB">
        <title>Shotgun proteomic analysis of total and membrane protein extracts of S. aureus strain N315.</title>
        <authorList>
            <person name="Vaezzadeh A.R."/>
            <person name="Deshusses J."/>
            <person name="Lescuyer P."/>
            <person name="Hochstrasser D.F."/>
        </authorList>
    </citation>
    <scope>IDENTIFICATION BY MASS SPECTROMETRY [LARGE SCALE ANALYSIS]</scope>
    <source>
        <strain>N315</strain>
    </source>
</reference>
<comment type="subcellular location">
    <subcellularLocation>
        <location evidence="1">Cell membrane</location>
        <topology evidence="1">Multi-pass membrane protein</topology>
    </subcellularLocation>
</comment>
<comment type="similarity">
    <text evidence="3">Belongs to the UPF0754 family.</text>
</comment>
<evidence type="ECO:0000250" key="1"/>
<evidence type="ECO:0000255" key="2"/>
<evidence type="ECO:0000305" key="3"/>
<name>Y1664_STAAN</name>
<organism>
    <name type="scientific">Staphylococcus aureus (strain N315)</name>
    <dbReference type="NCBI Taxonomy" id="158879"/>
    <lineage>
        <taxon>Bacteria</taxon>
        <taxon>Bacillati</taxon>
        <taxon>Bacillota</taxon>
        <taxon>Bacilli</taxon>
        <taxon>Bacillales</taxon>
        <taxon>Staphylococcaceae</taxon>
        <taxon>Staphylococcus</taxon>
    </lineage>
</organism>
<feature type="chain" id="PRO_0000388313" description="UPF0754 membrane protein SA1664">
    <location>
        <begin position="1"/>
        <end position="374"/>
    </location>
</feature>
<feature type="transmembrane region" description="Helical" evidence="2">
    <location>
        <begin position="4"/>
        <end position="24"/>
    </location>
</feature>
<feature type="transmembrane region" description="Helical" evidence="2">
    <location>
        <begin position="354"/>
        <end position="374"/>
    </location>
</feature>
<gene>
    <name type="ordered locus">SA1664</name>
</gene>
<dbReference type="EMBL" id="BA000018">
    <property type="protein sequence ID" value="BAB42932.1"/>
    <property type="molecule type" value="Genomic_DNA"/>
</dbReference>
<dbReference type="PIR" id="E89971">
    <property type="entry name" value="E89971"/>
</dbReference>
<dbReference type="RefSeq" id="WP_000992518.1">
    <property type="nucleotide sequence ID" value="NC_002745.2"/>
</dbReference>
<dbReference type="SMR" id="Q7A4V2"/>
<dbReference type="EnsemblBacteria" id="BAB42932">
    <property type="protein sequence ID" value="BAB42932"/>
    <property type="gene ID" value="BAB42932"/>
</dbReference>
<dbReference type="KEGG" id="sau:SA1664"/>
<dbReference type="HOGENOM" id="CLU_042384_0_0_9"/>
<dbReference type="GO" id="GO:0005886">
    <property type="term" value="C:plasma membrane"/>
    <property type="evidence" value="ECO:0007669"/>
    <property type="project" value="UniProtKB-SubCell"/>
</dbReference>
<dbReference type="InterPro" id="IPR007383">
    <property type="entry name" value="DUF445"/>
</dbReference>
<dbReference type="InterPro" id="IPR016991">
    <property type="entry name" value="UCP032178"/>
</dbReference>
<dbReference type="PANTHER" id="PTHR35791">
    <property type="entry name" value="UPF0754 MEMBRANE PROTEIN YHEB"/>
    <property type="match status" value="1"/>
</dbReference>
<dbReference type="PANTHER" id="PTHR35791:SF1">
    <property type="entry name" value="UPF0754 MEMBRANE PROTEIN YHEB"/>
    <property type="match status" value="1"/>
</dbReference>
<dbReference type="Pfam" id="PF04286">
    <property type="entry name" value="DUF445"/>
    <property type="match status" value="1"/>
</dbReference>
<dbReference type="PIRSF" id="PIRSF032178">
    <property type="entry name" value="UCP032178"/>
    <property type="match status" value="1"/>
</dbReference>
<protein>
    <recommendedName>
        <fullName>UPF0754 membrane protein SA1664</fullName>
    </recommendedName>
</protein>
<accession>Q7A4V2</accession>
<proteinExistence type="evidence at protein level"/>
<sequence length="374" mass="42706">MNALFIIIFMIVVGAIIGGITNVIAIRMLFHPFKPYYIFKFRVPFTPGLIPKRREEIATKIGQVIEEHLLTETLINEKLKSEQSQQAIESMIQQQLQKLTKDQLSIKQITSQIDIDLEQVLQTNGNQYIESQLNNYYTKHQNQTIASLLPNQLVTFLDQHVDNATDLLCDRARNYLSSAKGTQDINDMLDTFFHEKGKLIGMLQMFMTKESIADRIQQELIRLTSHPKARTIVTSLITNEYQTFKDKPLNELLDASQFNEIAENLSVYVTTYASNQANKPVVTLMPQFVDYLEGQLSSKLANLIIEKLSIHLSTIMKKVDLRGLIEEQINTFDLDYIEKLIIEIANKELKLIMSLGFILGGIIGFFQGLVAIFV</sequence>